<gene>
    <name evidence="1" type="primary">rplR</name>
    <name type="ordered locus">Pcar_0717</name>
</gene>
<comment type="function">
    <text evidence="1">This is one of the proteins that bind and probably mediate the attachment of the 5S RNA into the large ribosomal subunit, where it forms part of the central protuberance.</text>
</comment>
<comment type="subunit">
    <text evidence="1">Part of the 50S ribosomal subunit; part of the 5S rRNA/L5/L18/L25 subcomplex. Contacts the 5S and 23S rRNAs.</text>
</comment>
<comment type="similarity">
    <text evidence="1">Belongs to the universal ribosomal protein uL18 family.</text>
</comment>
<reference key="1">
    <citation type="submission" date="2005-10" db="EMBL/GenBank/DDBJ databases">
        <title>Complete sequence of Pelobacter carbinolicus DSM 2380.</title>
        <authorList>
            <person name="Copeland A."/>
            <person name="Lucas S."/>
            <person name="Lapidus A."/>
            <person name="Barry K."/>
            <person name="Detter J.C."/>
            <person name="Glavina T."/>
            <person name="Hammon N."/>
            <person name="Israni S."/>
            <person name="Pitluck S."/>
            <person name="Chertkov O."/>
            <person name="Schmutz J."/>
            <person name="Larimer F."/>
            <person name="Land M."/>
            <person name="Kyrpides N."/>
            <person name="Ivanova N."/>
            <person name="Richardson P."/>
        </authorList>
    </citation>
    <scope>NUCLEOTIDE SEQUENCE [LARGE SCALE GENOMIC DNA]</scope>
    <source>
        <strain>DSM 2380 / NBRC 103641 / GraBd1</strain>
    </source>
</reference>
<accession>Q3A6N1</accession>
<protein>
    <recommendedName>
        <fullName evidence="1">Large ribosomal subunit protein uL18</fullName>
    </recommendedName>
    <alternativeName>
        <fullName evidence="2">50S ribosomal protein L18</fullName>
    </alternativeName>
</protein>
<dbReference type="EMBL" id="CP000142">
    <property type="protein sequence ID" value="ABA87976.1"/>
    <property type="molecule type" value="Genomic_DNA"/>
</dbReference>
<dbReference type="SMR" id="Q3A6N1"/>
<dbReference type="STRING" id="338963.Pcar_0717"/>
<dbReference type="KEGG" id="pca:Pcar_0717"/>
<dbReference type="eggNOG" id="COG0256">
    <property type="taxonomic scope" value="Bacteria"/>
</dbReference>
<dbReference type="HOGENOM" id="CLU_098841_0_1_7"/>
<dbReference type="OrthoDB" id="9810939at2"/>
<dbReference type="Proteomes" id="UP000002534">
    <property type="component" value="Chromosome"/>
</dbReference>
<dbReference type="GO" id="GO:0022625">
    <property type="term" value="C:cytosolic large ribosomal subunit"/>
    <property type="evidence" value="ECO:0007669"/>
    <property type="project" value="TreeGrafter"/>
</dbReference>
<dbReference type="GO" id="GO:0008097">
    <property type="term" value="F:5S rRNA binding"/>
    <property type="evidence" value="ECO:0007669"/>
    <property type="project" value="TreeGrafter"/>
</dbReference>
<dbReference type="GO" id="GO:0003735">
    <property type="term" value="F:structural constituent of ribosome"/>
    <property type="evidence" value="ECO:0007669"/>
    <property type="project" value="InterPro"/>
</dbReference>
<dbReference type="GO" id="GO:0006412">
    <property type="term" value="P:translation"/>
    <property type="evidence" value="ECO:0007669"/>
    <property type="project" value="UniProtKB-UniRule"/>
</dbReference>
<dbReference type="CDD" id="cd00432">
    <property type="entry name" value="Ribosomal_L18_L5e"/>
    <property type="match status" value="1"/>
</dbReference>
<dbReference type="FunFam" id="3.30.420.100:FF:000001">
    <property type="entry name" value="50S ribosomal protein L18"/>
    <property type="match status" value="1"/>
</dbReference>
<dbReference type="Gene3D" id="3.30.420.100">
    <property type="match status" value="1"/>
</dbReference>
<dbReference type="HAMAP" id="MF_01337_B">
    <property type="entry name" value="Ribosomal_uL18_B"/>
    <property type="match status" value="1"/>
</dbReference>
<dbReference type="InterPro" id="IPR004389">
    <property type="entry name" value="Ribosomal_uL18_bac-type"/>
</dbReference>
<dbReference type="InterPro" id="IPR005484">
    <property type="entry name" value="Ribosomal_uL18_bac/euk"/>
</dbReference>
<dbReference type="NCBIfam" id="TIGR00060">
    <property type="entry name" value="L18_bact"/>
    <property type="match status" value="1"/>
</dbReference>
<dbReference type="PANTHER" id="PTHR12899">
    <property type="entry name" value="39S RIBOSOMAL PROTEIN L18, MITOCHONDRIAL"/>
    <property type="match status" value="1"/>
</dbReference>
<dbReference type="PANTHER" id="PTHR12899:SF3">
    <property type="entry name" value="LARGE RIBOSOMAL SUBUNIT PROTEIN UL18M"/>
    <property type="match status" value="1"/>
</dbReference>
<dbReference type="Pfam" id="PF00861">
    <property type="entry name" value="Ribosomal_L18p"/>
    <property type="match status" value="1"/>
</dbReference>
<dbReference type="SUPFAM" id="SSF53137">
    <property type="entry name" value="Translational machinery components"/>
    <property type="match status" value="1"/>
</dbReference>
<keyword id="KW-1185">Reference proteome</keyword>
<keyword id="KW-0687">Ribonucleoprotein</keyword>
<keyword id="KW-0689">Ribosomal protein</keyword>
<keyword id="KW-0694">RNA-binding</keyword>
<keyword id="KW-0699">rRNA-binding</keyword>
<organism>
    <name type="scientific">Syntrophotalea carbinolica (strain DSM 2380 / NBRC 103641 / GraBd1)</name>
    <name type="common">Pelobacter carbinolicus</name>
    <dbReference type="NCBI Taxonomy" id="338963"/>
    <lineage>
        <taxon>Bacteria</taxon>
        <taxon>Pseudomonadati</taxon>
        <taxon>Thermodesulfobacteriota</taxon>
        <taxon>Desulfuromonadia</taxon>
        <taxon>Desulfuromonadales</taxon>
        <taxon>Syntrophotaleaceae</taxon>
        <taxon>Syntrophotalea</taxon>
    </lineage>
</organism>
<proteinExistence type="inferred from homology"/>
<sequence>MNAALKRRQARLKRQVRVRRKLRGTPEMPRLCVFRSAKHIYAQIIEDVTGKTLVSASTVNSDVVEGLENTGNVEAAKAVGKAIAQKALGMDIKNVVFDRNGFLYHGRVKTLAEAAREAGLSF</sequence>
<evidence type="ECO:0000255" key="1">
    <source>
        <dbReference type="HAMAP-Rule" id="MF_01337"/>
    </source>
</evidence>
<evidence type="ECO:0000305" key="2"/>
<name>RL18_SYNC1</name>
<feature type="chain" id="PRO_0000251340" description="Large ribosomal subunit protein uL18">
    <location>
        <begin position="1"/>
        <end position="122"/>
    </location>
</feature>